<organism>
    <name type="scientific">Simmondsia chinensis</name>
    <name type="common">Jojoba</name>
    <name type="synonym">Buxus chinensis</name>
    <dbReference type="NCBI Taxonomy" id="3999"/>
    <lineage>
        <taxon>Eukaryota</taxon>
        <taxon>Viridiplantae</taxon>
        <taxon>Streptophyta</taxon>
        <taxon>Embryophyta</taxon>
        <taxon>Tracheophyta</taxon>
        <taxon>Spermatophyta</taxon>
        <taxon>Magnoliopsida</taxon>
        <taxon>eudicotyledons</taxon>
        <taxon>Gunneridae</taxon>
        <taxon>Pentapetalae</taxon>
        <taxon>Caryophyllales</taxon>
        <taxon>Simmondsiaceae</taxon>
        <taxon>Simmondsia</taxon>
    </lineage>
</organism>
<feature type="chain" id="PRO_0000421755" description="Alcohol-forming fatty acyl-CoA reductase">
    <location>
        <begin position="1"/>
        <end position="493"/>
    </location>
</feature>
<sequence>MEEMGSILEFLDNKAILVTGATGSLAKIFVEKVLRSQPNVKKLYLLLRATDDETAALRLQNEVFGKELFKVLKQNLGANFYSFVSEKVTVVPGDITGEDLCLKDVNLKEEMWREIDVVVNLAATINFIERYDVSLLINTYGAKYVLDFAKKCNKLKIFVHVSTAYVSGEKNGLILEKPYYMGESLNGRLGLDINVEKKLVEAKINELQAAGATEKSIKSTMKDMGIERARHWGWPNVYVFTKALGEMLLMQYKGDIPLTIIRPTIITSTFKEPFPGWVEGVRTIDNVPVYYGKGRLRCMLCGPSTIIDLIPADMVVNATIVAMVAHANQRYVEPVTYHVGSSAANPMKLSALPEMAHRYFTKNPWINPDRNPVHVGRAMVFSSFSTFHLYLTLNFLLPLKVLEIANTIFCQWFKGKYMDLKRKTRLLLRLVDIYKPYLFFQGIFDDMNTEKLRIAAKESIVEADMFYFDPRAINWEDYFLKTHFPGVVEHVLN</sequence>
<proteinExistence type="evidence at protein level"/>
<evidence type="ECO:0000269" key="1">
    <source>
    </source>
</evidence>
<evidence type="ECO:0000305" key="2"/>
<accession>Q9XGY7</accession>
<keyword id="KW-0444">Lipid biosynthesis</keyword>
<keyword id="KW-0443">Lipid metabolism</keyword>
<keyword id="KW-0521">NADP</keyword>
<keyword id="KW-0560">Oxidoreductase</keyword>
<dbReference type="EC" id="1.2.1.84"/>
<dbReference type="EMBL" id="AF149917">
    <property type="protein sequence ID" value="AAD38039.1"/>
    <property type="molecule type" value="mRNA"/>
</dbReference>
<dbReference type="SMR" id="Q9XGY7"/>
<dbReference type="KEGG" id="ag:AAD38039"/>
<dbReference type="BioCyc" id="MetaCyc:MONOMER-13889"/>
<dbReference type="BRENDA" id="1.2.1.84">
    <property type="organism ID" value="5733"/>
</dbReference>
<dbReference type="GO" id="GO:0043231">
    <property type="term" value="C:intracellular membrane-bounded organelle"/>
    <property type="evidence" value="ECO:0007669"/>
    <property type="project" value="TreeGrafter"/>
</dbReference>
<dbReference type="GO" id="GO:0102965">
    <property type="term" value="F:alcohol-forming long-chain fatty acyl-CoA reductase activity"/>
    <property type="evidence" value="ECO:0007669"/>
    <property type="project" value="UniProtKB-EC"/>
</dbReference>
<dbReference type="GO" id="GO:0080019">
    <property type="term" value="F:alcohol-forming very long-chain fatty acyl-CoA reductase activity"/>
    <property type="evidence" value="ECO:0007669"/>
    <property type="project" value="InterPro"/>
</dbReference>
<dbReference type="GO" id="GO:0035336">
    <property type="term" value="P:long-chain fatty-acyl-CoA metabolic process"/>
    <property type="evidence" value="ECO:0007669"/>
    <property type="project" value="TreeGrafter"/>
</dbReference>
<dbReference type="GO" id="GO:0010345">
    <property type="term" value="P:suberin biosynthetic process"/>
    <property type="evidence" value="ECO:0007669"/>
    <property type="project" value="TreeGrafter"/>
</dbReference>
<dbReference type="CDD" id="cd05236">
    <property type="entry name" value="FAR-N_SDR_e"/>
    <property type="match status" value="1"/>
</dbReference>
<dbReference type="CDD" id="cd09071">
    <property type="entry name" value="FAR_C"/>
    <property type="match status" value="1"/>
</dbReference>
<dbReference type="Gene3D" id="3.40.50.720">
    <property type="entry name" value="NAD(P)-binding Rossmann-like Domain"/>
    <property type="match status" value="1"/>
</dbReference>
<dbReference type="InterPro" id="IPR026055">
    <property type="entry name" value="FAR"/>
</dbReference>
<dbReference type="InterPro" id="IPR033640">
    <property type="entry name" value="FAR_C"/>
</dbReference>
<dbReference type="InterPro" id="IPR013120">
    <property type="entry name" value="Far_NAD-bd"/>
</dbReference>
<dbReference type="InterPro" id="IPR036291">
    <property type="entry name" value="NAD(P)-bd_dom_sf"/>
</dbReference>
<dbReference type="PANTHER" id="PTHR11011:SF99">
    <property type="entry name" value="FATTY ACYL-COA REDUCTASE 3"/>
    <property type="match status" value="1"/>
</dbReference>
<dbReference type="PANTHER" id="PTHR11011">
    <property type="entry name" value="MALE STERILITY PROTEIN 2-RELATED"/>
    <property type="match status" value="1"/>
</dbReference>
<dbReference type="Pfam" id="PF07993">
    <property type="entry name" value="NAD_binding_4"/>
    <property type="match status" value="1"/>
</dbReference>
<dbReference type="Pfam" id="PF03015">
    <property type="entry name" value="Sterile"/>
    <property type="match status" value="1"/>
</dbReference>
<dbReference type="SUPFAM" id="SSF51735">
    <property type="entry name" value="NAD(P)-binding Rossmann-fold domains"/>
    <property type="match status" value="1"/>
</dbReference>
<reference key="1">
    <citation type="journal article" date="2000" name="Plant Physiol.">
        <title>Purification of a jojoba embryo fatty acyl-coenzyme A reductase and expression of its cDNA in high erucic acid rapeseed.</title>
        <authorList>
            <person name="Metz J.G."/>
            <person name="Pollard M.R."/>
            <person name="Anderson L."/>
            <person name="Hayes T.R."/>
            <person name="Lassner M.W."/>
        </authorList>
    </citation>
    <scope>NUCLEOTIDE SEQUENCE [MRNA]</scope>
    <scope>FUNCTION</scope>
    <scope>CATALYTIC ACTIVITY</scope>
</reference>
<name>FAR_SIMCH</name>
<protein>
    <recommendedName>
        <fullName>Alcohol-forming fatty acyl-CoA reductase</fullName>
        <ecNumber>1.2.1.84</ecNumber>
    </recommendedName>
</protein>
<comment type="function">
    <text evidence="1">NADPH-dependent alcohol-forming fatty acyl-coenzyme A reductase that catalyzes the reduction of fatty acyl-CoA to fatty alcohols. The recombinant enzyme accepts saturated and mono-unsaturated fatty acyl-CoAs of 16 to 22 carbons.</text>
</comment>
<comment type="catalytic activity">
    <reaction evidence="1">
        <text>a long-chain fatty acyl-CoA + 2 NADPH + 2 H(+) = a long-chain primary fatty alcohol + 2 NADP(+) + CoA</text>
        <dbReference type="Rhea" id="RHEA:52716"/>
        <dbReference type="ChEBI" id="CHEBI:15378"/>
        <dbReference type="ChEBI" id="CHEBI:57287"/>
        <dbReference type="ChEBI" id="CHEBI:57783"/>
        <dbReference type="ChEBI" id="CHEBI:58349"/>
        <dbReference type="ChEBI" id="CHEBI:77396"/>
        <dbReference type="ChEBI" id="CHEBI:83139"/>
        <dbReference type="EC" id="1.2.1.84"/>
    </reaction>
</comment>
<comment type="similarity">
    <text evidence="2">Belongs to the fatty acyl-CoA reductase family.</text>
</comment>